<sequence length="343" mass="37761">MTVSRDSLVLIHPAVTQQPELLETIEKGSILSETTIVAQYLINKLNDGTISPDDEKYDVIYYVTPEKPEAIQFPPKLIPVLHKTLKPSGRLYGLSDTLKVDALINGFEIVSNNGSEYYWVKESREKKAPVSISLKGNMKNGASAPVALPSFKKLNKTQPIGSSPSAGLAVSLKKLPTFKKLTKKVSAIKLTDSDLEDDDDDLESDDSANNSKTKFFDDFDDPETGDSIDEDDLIAETEEDTITMIQCGKSKQRRRKACKDCSCGLKEMEEQEIESRRAKQQQVIKFSEEELTEIDFTIEGKKVGGCGSCALGDAFRCSGCPYLGLPAFKPGQSINLNSISDDL</sequence>
<organism>
    <name type="scientific">Kluyveromyces lactis (strain ATCC 8585 / CBS 2359 / DSM 70799 / NBRC 1267 / NRRL Y-1140 / WM37)</name>
    <name type="common">Yeast</name>
    <name type="synonym">Candida sphaerica</name>
    <dbReference type="NCBI Taxonomy" id="284590"/>
    <lineage>
        <taxon>Eukaryota</taxon>
        <taxon>Fungi</taxon>
        <taxon>Dikarya</taxon>
        <taxon>Ascomycota</taxon>
        <taxon>Saccharomycotina</taxon>
        <taxon>Saccharomycetes</taxon>
        <taxon>Saccharomycetales</taxon>
        <taxon>Saccharomycetaceae</taxon>
        <taxon>Kluyveromyces</taxon>
    </lineage>
</organism>
<feature type="chain" id="PRO_0000324865" description="Fe-S cluster assembly protein DRE2">
    <location>
        <begin position="1"/>
        <end position="343"/>
    </location>
</feature>
<feature type="region of interest" description="N-terminal SAM-like domain" evidence="1">
    <location>
        <begin position="1"/>
        <end position="188"/>
    </location>
</feature>
<feature type="region of interest" description="Linker" evidence="1">
    <location>
        <begin position="189"/>
        <end position="240"/>
    </location>
</feature>
<feature type="region of interest" description="Disordered" evidence="2">
    <location>
        <begin position="195"/>
        <end position="228"/>
    </location>
</feature>
<feature type="region of interest" description="Fe-S binding site A" evidence="1">
    <location>
        <begin position="247"/>
        <end position="263"/>
    </location>
</feature>
<feature type="region of interest" description="Fe-S binding site B" evidence="1">
    <location>
        <begin position="306"/>
        <end position="320"/>
    </location>
</feature>
<feature type="short sequence motif" description="Cx2C motif 1" evidence="1">
    <location>
        <begin position="306"/>
        <end position="309"/>
    </location>
</feature>
<feature type="short sequence motif" description="Cx2C motif 2" evidence="1">
    <location>
        <begin position="317"/>
        <end position="320"/>
    </location>
</feature>
<feature type="compositionally biased region" description="Acidic residues" evidence="2">
    <location>
        <begin position="195"/>
        <end position="206"/>
    </location>
</feature>
<feature type="compositionally biased region" description="Acidic residues" evidence="2">
    <location>
        <begin position="218"/>
        <end position="228"/>
    </location>
</feature>
<feature type="binding site" evidence="1">
    <location>
        <position position="247"/>
    </location>
    <ligand>
        <name>[2Fe-2S] cluster</name>
        <dbReference type="ChEBI" id="CHEBI:190135"/>
    </ligand>
</feature>
<feature type="binding site" evidence="1">
    <location>
        <position position="258"/>
    </location>
    <ligand>
        <name>[2Fe-2S] cluster</name>
        <dbReference type="ChEBI" id="CHEBI:190135"/>
    </ligand>
</feature>
<feature type="binding site" evidence="1">
    <location>
        <position position="261"/>
    </location>
    <ligand>
        <name>[2Fe-2S] cluster</name>
        <dbReference type="ChEBI" id="CHEBI:190135"/>
    </ligand>
</feature>
<feature type="binding site" evidence="1">
    <location>
        <position position="263"/>
    </location>
    <ligand>
        <name>[2Fe-2S] cluster</name>
        <dbReference type="ChEBI" id="CHEBI:190135"/>
    </ligand>
</feature>
<feature type="binding site" evidence="1">
    <location>
        <position position="306"/>
    </location>
    <ligand>
        <name>[4Fe-4S] cluster</name>
        <dbReference type="ChEBI" id="CHEBI:49883"/>
    </ligand>
</feature>
<feature type="binding site" evidence="1">
    <location>
        <position position="309"/>
    </location>
    <ligand>
        <name>[4Fe-4S] cluster</name>
        <dbReference type="ChEBI" id="CHEBI:49883"/>
    </ligand>
</feature>
<feature type="binding site" evidence="1">
    <location>
        <position position="317"/>
    </location>
    <ligand>
        <name>[4Fe-4S] cluster</name>
        <dbReference type="ChEBI" id="CHEBI:49883"/>
    </ligand>
</feature>
<feature type="binding site" evidence="1">
    <location>
        <position position="320"/>
    </location>
    <ligand>
        <name>[4Fe-4S] cluster</name>
        <dbReference type="ChEBI" id="CHEBI:49883"/>
    </ligand>
</feature>
<keyword id="KW-0001">2Fe-2S</keyword>
<keyword id="KW-0004">4Fe-4S</keyword>
<keyword id="KW-0963">Cytoplasm</keyword>
<keyword id="KW-0408">Iron</keyword>
<keyword id="KW-0411">Iron-sulfur</keyword>
<keyword id="KW-0479">Metal-binding</keyword>
<keyword id="KW-0496">Mitochondrion</keyword>
<keyword id="KW-1185">Reference proteome</keyword>
<gene>
    <name evidence="1" type="primary">DRE2</name>
    <name type="ordered locus">KLLA0F16236g</name>
</gene>
<evidence type="ECO:0000255" key="1">
    <source>
        <dbReference type="HAMAP-Rule" id="MF_03115"/>
    </source>
</evidence>
<evidence type="ECO:0000256" key="2">
    <source>
        <dbReference type="SAM" id="MobiDB-lite"/>
    </source>
</evidence>
<protein>
    <recommendedName>
        <fullName evidence="1">Fe-S cluster assembly protein DRE2</fullName>
    </recommendedName>
    <alternativeName>
        <fullName evidence="1">Anamorsin homolog</fullName>
    </alternativeName>
</protein>
<comment type="function">
    <text evidence="1">Component of the cytosolic iron-sulfur (Fe-S) protein assembly (CIA) machinery required for the maturation of extramitochondrial Fe-S proteins. Part of an electron transfer chain functioning in an early step of cytosolic Fe-S biogenesis, facilitating the de novo assembly of a [4Fe-4S] cluster on the scaffold complex CFD1-NBP35. Electrons are transferred to DRE2 from NADPH via the FAD- and FMN-containing protein TAH18. TAH18-DRE2 are also required for the assembly of the diferric tyrosyl radical cofactor of ribonucleotide reductase (RNR), probably by providing electrons for reduction during radical cofactor maturation in the catalytic small subunit RNR2.</text>
</comment>
<comment type="cofactor">
    <cofactor evidence="1">
        <name>[2Fe-2S] cluster</name>
        <dbReference type="ChEBI" id="CHEBI:190135"/>
    </cofactor>
</comment>
<comment type="cofactor">
    <cofactor evidence="1">
        <name>[4Fe-4S] cluster</name>
        <dbReference type="ChEBI" id="CHEBI:49883"/>
    </cofactor>
</comment>
<comment type="subunit">
    <text evidence="1">Monomer. Interacts with TAH18. Interacts with MIA40.</text>
</comment>
<comment type="subcellular location">
    <subcellularLocation>
        <location evidence="1">Cytoplasm</location>
    </subcellularLocation>
    <subcellularLocation>
        <location evidence="1">Mitochondrion intermembrane space</location>
    </subcellularLocation>
</comment>
<comment type="domain">
    <text evidence="1">The C-terminal domain binds 2 Fe-S clusters but is otherwise mostly in an intrinsically disordered conformation.</text>
</comment>
<comment type="domain">
    <text evidence="1">The N-terminal domain has structural similarity with S-adenosyl-L-methionine-dependent methyltransferases, but does not bind S-adenosyl-L-methionine. It is required for correct assembly of the 2 Fe-S clusters.</text>
</comment>
<comment type="domain">
    <text evidence="1">The twin Cx2C motifs are involved in the recognition by the mitochondrial MIA40-ERV1 disulfide relay system. The formation of 2 disulfide bonds in the Cx2C motifs through dithiol/disulfide exchange reactions effectively traps the protein in the mitochondrial intermembrane space.</text>
</comment>
<comment type="similarity">
    <text evidence="1">Belongs to the anamorsin family.</text>
</comment>
<name>DRE2_KLULA</name>
<accession>Q6CJS8</accession>
<proteinExistence type="inferred from homology"/>
<reference key="1">
    <citation type="journal article" date="2004" name="Nature">
        <title>Genome evolution in yeasts.</title>
        <authorList>
            <person name="Dujon B."/>
            <person name="Sherman D."/>
            <person name="Fischer G."/>
            <person name="Durrens P."/>
            <person name="Casaregola S."/>
            <person name="Lafontaine I."/>
            <person name="de Montigny J."/>
            <person name="Marck C."/>
            <person name="Neuveglise C."/>
            <person name="Talla E."/>
            <person name="Goffard N."/>
            <person name="Frangeul L."/>
            <person name="Aigle M."/>
            <person name="Anthouard V."/>
            <person name="Babour A."/>
            <person name="Barbe V."/>
            <person name="Barnay S."/>
            <person name="Blanchin S."/>
            <person name="Beckerich J.-M."/>
            <person name="Beyne E."/>
            <person name="Bleykasten C."/>
            <person name="Boisrame A."/>
            <person name="Boyer J."/>
            <person name="Cattolico L."/>
            <person name="Confanioleri F."/>
            <person name="de Daruvar A."/>
            <person name="Despons L."/>
            <person name="Fabre E."/>
            <person name="Fairhead C."/>
            <person name="Ferry-Dumazet H."/>
            <person name="Groppi A."/>
            <person name="Hantraye F."/>
            <person name="Hennequin C."/>
            <person name="Jauniaux N."/>
            <person name="Joyet P."/>
            <person name="Kachouri R."/>
            <person name="Kerrest A."/>
            <person name="Koszul R."/>
            <person name="Lemaire M."/>
            <person name="Lesur I."/>
            <person name="Ma L."/>
            <person name="Muller H."/>
            <person name="Nicaud J.-M."/>
            <person name="Nikolski M."/>
            <person name="Oztas S."/>
            <person name="Ozier-Kalogeropoulos O."/>
            <person name="Pellenz S."/>
            <person name="Potier S."/>
            <person name="Richard G.-F."/>
            <person name="Straub M.-L."/>
            <person name="Suleau A."/>
            <person name="Swennen D."/>
            <person name="Tekaia F."/>
            <person name="Wesolowski-Louvel M."/>
            <person name="Westhof E."/>
            <person name="Wirth B."/>
            <person name="Zeniou-Meyer M."/>
            <person name="Zivanovic Y."/>
            <person name="Bolotin-Fukuhara M."/>
            <person name="Thierry A."/>
            <person name="Bouchier C."/>
            <person name="Caudron B."/>
            <person name="Scarpelli C."/>
            <person name="Gaillardin C."/>
            <person name="Weissenbach J."/>
            <person name="Wincker P."/>
            <person name="Souciet J.-L."/>
        </authorList>
    </citation>
    <scope>NUCLEOTIDE SEQUENCE [LARGE SCALE GENOMIC DNA]</scope>
    <source>
        <strain>ATCC 8585 / CBS 2359 / DSM 70799 / NBRC 1267 / NRRL Y-1140 / WM37</strain>
    </source>
</reference>
<dbReference type="EMBL" id="CR382126">
    <property type="protein sequence ID" value="CAG98519.1"/>
    <property type="molecule type" value="Genomic_DNA"/>
</dbReference>
<dbReference type="RefSeq" id="XP_455811.1">
    <property type="nucleotide sequence ID" value="XM_455811.1"/>
</dbReference>
<dbReference type="SMR" id="Q6CJS8"/>
<dbReference type="FunCoup" id="Q6CJS8">
    <property type="interactions" value="184"/>
</dbReference>
<dbReference type="STRING" id="284590.Q6CJS8"/>
<dbReference type="PaxDb" id="284590-Q6CJS8"/>
<dbReference type="KEGG" id="kla:KLLA0_F16236g"/>
<dbReference type="eggNOG" id="KOG4020">
    <property type="taxonomic scope" value="Eukaryota"/>
</dbReference>
<dbReference type="HOGENOM" id="CLU_067152_0_0_1"/>
<dbReference type="InParanoid" id="Q6CJS8"/>
<dbReference type="OMA" id="TMITCGK"/>
<dbReference type="Proteomes" id="UP000000598">
    <property type="component" value="Chromosome F"/>
</dbReference>
<dbReference type="GO" id="GO:0005758">
    <property type="term" value="C:mitochondrial intermembrane space"/>
    <property type="evidence" value="ECO:0007669"/>
    <property type="project" value="UniProtKB-SubCell"/>
</dbReference>
<dbReference type="GO" id="GO:0051537">
    <property type="term" value="F:2 iron, 2 sulfur cluster binding"/>
    <property type="evidence" value="ECO:0007669"/>
    <property type="project" value="UniProtKB-UniRule"/>
</dbReference>
<dbReference type="GO" id="GO:0051539">
    <property type="term" value="F:4 iron, 4 sulfur cluster binding"/>
    <property type="evidence" value="ECO:0007669"/>
    <property type="project" value="UniProtKB-KW"/>
</dbReference>
<dbReference type="GO" id="GO:0009055">
    <property type="term" value="F:electron transfer activity"/>
    <property type="evidence" value="ECO:0007669"/>
    <property type="project" value="UniProtKB-UniRule"/>
</dbReference>
<dbReference type="GO" id="GO:0046872">
    <property type="term" value="F:metal ion binding"/>
    <property type="evidence" value="ECO:0007669"/>
    <property type="project" value="UniProtKB-KW"/>
</dbReference>
<dbReference type="GO" id="GO:0016226">
    <property type="term" value="P:iron-sulfur cluster assembly"/>
    <property type="evidence" value="ECO:0007669"/>
    <property type="project" value="UniProtKB-UniRule"/>
</dbReference>
<dbReference type="Gene3D" id="3.40.50.11000">
    <property type="entry name" value="Fe-S cluster assembly protein Dre2, N-terminal domain"/>
    <property type="match status" value="1"/>
</dbReference>
<dbReference type="HAMAP" id="MF_03115">
    <property type="entry name" value="Anamorsin"/>
    <property type="match status" value="1"/>
</dbReference>
<dbReference type="InterPro" id="IPR007785">
    <property type="entry name" value="Anamorsin"/>
</dbReference>
<dbReference type="InterPro" id="IPR046408">
    <property type="entry name" value="CIAPIN1"/>
</dbReference>
<dbReference type="InterPro" id="IPR031838">
    <property type="entry name" value="Dre2_N"/>
</dbReference>
<dbReference type="PANTHER" id="PTHR13273">
    <property type="entry name" value="ANAMORSIN"/>
    <property type="match status" value="1"/>
</dbReference>
<dbReference type="PANTHER" id="PTHR13273:SF14">
    <property type="entry name" value="ANAMORSIN"/>
    <property type="match status" value="1"/>
</dbReference>
<dbReference type="Pfam" id="PF05093">
    <property type="entry name" value="CIAPIN1"/>
    <property type="match status" value="1"/>
</dbReference>
<dbReference type="Pfam" id="PF16803">
    <property type="entry name" value="DRE2_N"/>
    <property type="match status" value="1"/>
</dbReference>